<reference key="1">
    <citation type="journal article" date="2006" name="J. Bacteriol.">
        <title>Genome sequence of Aeromonas hydrophila ATCC 7966T: jack of all trades.</title>
        <authorList>
            <person name="Seshadri R."/>
            <person name="Joseph S.W."/>
            <person name="Chopra A.K."/>
            <person name="Sha J."/>
            <person name="Shaw J."/>
            <person name="Graf J."/>
            <person name="Haft D.H."/>
            <person name="Wu M."/>
            <person name="Ren Q."/>
            <person name="Rosovitz M.J."/>
            <person name="Madupu R."/>
            <person name="Tallon L."/>
            <person name="Kim M."/>
            <person name="Jin S."/>
            <person name="Vuong H."/>
            <person name="Stine O.C."/>
            <person name="Ali A."/>
            <person name="Horneman A.J."/>
            <person name="Heidelberg J.F."/>
        </authorList>
    </citation>
    <scope>NUCLEOTIDE SEQUENCE [LARGE SCALE GENOMIC DNA]</scope>
    <source>
        <strain>ATCC 7966 / DSM 30187 / BCRC 13018 / CCUG 14551 / JCM 1027 / KCTC 2358 / NCIMB 9240 / NCTC 8049</strain>
    </source>
</reference>
<sequence>MTFTASQLLALLPLLLTTGAMVALMLAIAWKRCDDTAFVVTIAGLNLALFSLPIVMAQGDQGVTPLLQIDGYAVFYMGLVLIGALATCTFGRSWLKGYPDNREEFYLLLLIATAGGLVLAGSRHLASLFIGIEMLTLPMFGLVGYAYRERHSLEASIKYMVLSAAATAFLLFGMALLYAQAGSLSFSDLGLTLATTPAHHPLLMGGLGLMLVGFAFKLSLAPFHLWTPDVYEGAPAPVATFLATVSKIAVFCVLLRFYLAVPAAADPMIHWLLAAMAVISIVIGNLLALLQTNIKRMMGYSSISHFGYLLAVIVASRLGQMPVEAAGVYLLMYLFTSLGAFGVISMMSSPYRGKDADSLHSYRGLFWRRPYLTAVLTVMMLSLAGIPMTLGFIGKFYLIGVTVDAKLWWLSGAIVLGSALGLYYYLRVMVTLYLREPGMQLRDAKGDWAITSGGLVVLLSAALVVALGLYPQPVISLVQGFQNVVLH</sequence>
<protein>
    <recommendedName>
        <fullName evidence="1">NADH-quinone oxidoreductase subunit N</fullName>
        <ecNumber evidence="1">7.1.1.-</ecNumber>
    </recommendedName>
    <alternativeName>
        <fullName evidence="1">NADH dehydrogenase I subunit N</fullName>
    </alternativeName>
    <alternativeName>
        <fullName evidence="1">NDH-1 subunit N</fullName>
    </alternativeName>
</protein>
<proteinExistence type="inferred from homology"/>
<organism>
    <name type="scientific">Aeromonas hydrophila subsp. hydrophila (strain ATCC 7966 / DSM 30187 / BCRC 13018 / CCUG 14551 / JCM 1027 / KCTC 2358 / NCIMB 9240 / NCTC 8049)</name>
    <dbReference type="NCBI Taxonomy" id="380703"/>
    <lineage>
        <taxon>Bacteria</taxon>
        <taxon>Pseudomonadati</taxon>
        <taxon>Pseudomonadota</taxon>
        <taxon>Gammaproteobacteria</taxon>
        <taxon>Aeromonadales</taxon>
        <taxon>Aeromonadaceae</taxon>
        <taxon>Aeromonas</taxon>
    </lineage>
</organism>
<keyword id="KW-0997">Cell inner membrane</keyword>
<keyword id="KW-1003">Cell membrane</keyword>
<keyword id="KW-0472">Membrane</keyword>
<keyword id="KW-0520">NAD</keyword>
<keyword id="KW-0874">Quinone</keyword>
<keyword id="KW-1185">Reference proteome</keyword>
<keyword id="KW-1278">Translocase</keyword>
<keyword id="KW-0812">Transmembrane</keyword>
<keyword id="KW-1133">Transmembrane helix</keyword>
<keyword id="KW-0813">Transport</keyword>
<keyword id="KW-0830">Ubiquinone</keyword>
<dbReference type="EC" id="7.1.1.-" evidence="1"/>
<dbReference type="EMBL" id="CP000462">
    <property type="protein sequence ID" value="ABK39107.1"/>
    <property type="molecule type" value="Genomic_DNA"/>
</dbReference>
<dbReference type="RefSeq" id="WP_011705656.1">
    <property type="nucleotide sequence ID" value="NC_008570.1"/>
</dbReference>
<dbReference type="RefSeq" id="YP_856306.1">
    <property type="nucleotide sequence ID" value="NC_008570.1"/>
</dbReference>
<dbReference type="SMR" id="A0KJ55"/>
<dbReference type="STRING" id="380703.AHA_1770"/>
<dbReference type="EnsemblBacteria" id="ABK39107">
    <property type="protein sequence ID" value="ABK39107"/>
    <property type="gene ID" value="AHA_1770"/>
</dbReference>
<dbReference type="GeneID" id="4486788"/>
<dbReference type="KEGG" id="aha:AHA_1770"/>
<dbReference type="PATRIC" id="fig|380703.7.peg.1786"/>
<dbReference type="eggNOG" id="COG1007">
    <property type="taxonomic scope" value="Bacteria"/>
</dbReference>
<dbReference type="HOGENOM" id="CLU_007100_1_5_6"/>
<dbReference type="OrthoDB" id="9768329at2"/>
<dbReference type="Proteomes" id="UP000000756">
    <property type="component" value="Chromosome"/>
</dbReference>
<dbReference type="GO" id="GO:0005886">
    <property type="term" value="C:plasma membrane"/>
    <property type="evidence" value="ECO:0007669"/>
    <property type="project" value="UniProtKB-SubCell"/>
</dbReference>
<dbReference type="GO" id="GO:0008137">
    <property type="term" value="F:NADH dehydrogenase (ubiquinone) activity"/>
    <property type="evidence" value="ECO:0007669"/>
    <property type="project" value="InterPro"/>
</dbReference>
<dbReference type="GO" id="GO:0050136">
    <property type="term" value="F:NADH:ubiquinone reductase (non-electrogenic) activity"/>
    <property type="evidence" value="ECO:0007669"/>
    <property type="project" value="UniProtKB-UniRule"/>
</dbReference>
<dbReference type="GO" id="GO:0048038">
    <property type="term" value="F:quinone binding"/>
    <property type="evidence" value="ECO:0007669"/>
    <property type="project" value="UniProtKB-KW"/>
</dbReference>
<dbReference type="GO" id="GO:0042773">
    <property type="term" value="P:ATP synthesis coupled electron transport"/>
    <property type="evidence" value="ECO:0007669"/>
    <property type="project" value="InterPro"/>
</dbReference>
<dbReference type="HAMAP" id="MF_00445">
    <property type="entry name" value="NDH1_NuoN_1"/>
    <property type="match status" value="1"/>
</dbReference>
<dbReference type="InterPro" id="IPR010096">
    <property type="entry name" value="NADH-Q_OxRdtase_suN/2"/>
</dbReference>
<dbReference type="InterPro" id="IPR001750">
    <property type="entry name" value="ND/Mrp_TM"/>
</dbReference>
<dbReference type="NCBIfam" id="TIGR01770">
    <property type="entry name" value="NDH_I_N"/>
    <property type="match status" value="1"/>
</dbReference>
<dbReference type="NCBIfam" id="NF004439">
    <property type="entry name" value="PRK05777.1-1"/>
    <property type="match status" value="1"/>
</dbReference>
<dbReference type="PANTHER" id="PTHR22773">
    <property type="entry name" value="NADH DEHYDROGENASE"/>
    <property type="match status" value="1"/>
</dbReference>
<dbReference type="Pfam" id="PF00361">
    <property type="entry name" value="Proton_antipo_M"/>
    <property type="match status" value="1"/>
</dbReference>
<name>NUON_AERHH</name>
<accession>A0KJ55</accession>
<comment type="function">
    <text evidence="1">NDH-1 shuttles electrons from NADH, via FMN and iron-sulfur (Fe-S) centers, to quinones in the respiratory chain. The immediate electron acceptor for the enzyme in this species is believed to be ubiquinone. Couples the redox reaction to proton translocation (for every two electrons transferred, four hydrogen ions are translocated across the cytoplasmic membrane), and thus conserves the redox energy in a proton gradient.</text>
</comment>
<comment type="catalytic activity">
    <reaction evidence="1">
        <text>a quinone + NADH + 5 H(+)(in) = a quinol + NAD(+) + 4 H(+)(out)</text>
        <dbReference type="Rhea" id="RHEA:57888"/>
        <dbReference type="ChEBI" id="CHEBI:15378"/>
        <dbReference type="ChEBI" id="CHEBI:24646"/>
        <dbReference type="ChEBI" id="CHEBI:57540"/>
        <dbReference type="ChEBI" id="CHEBI:57945"/>
        <dbReference type="ChEBI" id="CHEBI:132124"/>
    </reaction>
</comment>
<comment type="subunit">
    <text evidence="1">NDH-1 is composed of 14 different subunits. Subunits NuoA, H, J, K, L, M, N constitute the membrane sector of the complex.</text>
</comment>
<comment type="subcellular location">
    <subcellularLocation>
        <location evidence="1">Cell inner membrane</location>
        <topology evidence="1">Multi-pass membrane protein</topology>
    </subcellularLocation>
</comment>
<comment type="similarity">
    <text evidence="1">Belongs to the complex I subunit 2 family.</text>
</comment>
<feature type="chain" id="PRO_0000391091" description="NADH-quinone oxidoreductase subunit N">
    <location>
        <begin position="1"/>
        <end position="487"/>
    </location>
</feature>
<feature type="transmembrane region" description="Helical" evidence="1">
    <location>
        <begin position="8"/>
        <end position="28"/>
    </location>
</feature>
<feature type="transmembrane region" description="Helical" evidence="1">
    <location>
        <begin position="37"/>
        <end position="57"/>
    </location>
</feature>
<feature type="transmembrane region" description="Helical" evidence="1">
    <location>
        <begin position="71"/>
        <end position="91"/>
    </location>
</feature>
<feature type="transmembrane region" description="Helical" evidence="1">
    <location>
        <begin position="104"/>
        <end position="124"/>
    </location>
</feature>
<feature type="transmembrane region" description="Helical" evidence="1">
    <location>
        <begin position="125"/>
        <end position="145"/>
    </location>
</feature>
<feature type="transmembrane region" description="Helical" evidence="1">
    <location>
        <begin position="159"/>
        <end position="179"/>
    </location>
</feature>
<feature type="transmembrane region" description="Helical" evidence="1">
    <location>
        <begin position="203"/>
        <end position="223"/>
    </location>
</feature>
<feature type="transmembrane region" description="Helical" evidence="1">
    <location>
        <begin position="235"/>
        <end position="255"/>
    </location>
</feature>
<feature type="transmembrane region" description="Helical" evidence="1">
    <location>
        <begin position="269"/>
        <end position="289"/>
    </location>
</feature>
<feature type="transmembrane region" description="Helical" evidence="1">
    <location>
        <begin position="303"/>
        <end position="323"/>
    </location>
</feature>
<feature type="transmembrane region" description="Helical" evidence="1">
    <location>
        <begin position="327"/>
        <end position="347"/>
    </location>
</feature>
<feature type="transmembrane region" description="Helical" evidence="1">
    <location>
        <begin position="374"/>
        <end position="394"/>
    </location>
</feature>
<feature type="transmembrane region" description="Helical" evidence="1">
    <location>
        <begin position="408"/>
        <end position="427"/>
    </location>
</feature>
<feature type="transmembrane region" description="Helical" evidence="1">
    <location>
        <begin position="449"/>
        <end position="469"/>
    </location>
</feature>
<gene>
    <name evidence="1" type="primary">nuoN</name>
    <name type="ordered locus">AHA_1770</name>
</gene>
<evidence type="ECO:0000255" key="1">
    <source>
        <dbReference type="HAMAP-Rule" id="MF_00445"/>
    </source>
</evidence>